<proteinExistence type="inferred from homology"/>
<reference key="1">
    <citation type="journal article" date="2010" name="PLoS Genet.">
        <title>Genome sequence of the plant growth promoting endophytic bacterium Enterobacter sp. 638.</title>
        <authorList>
            <person name="Taghavi S."/>
            <person name="van der Lelie D."/>
            <person name="Hoffman A."/>
            <person name="Zhang Y.B."/>
            <person name="Walla M.D."/>
            <person name="Vangronsveld J."/>
            <person name="Newman L."/>
            <person name="Monchy S."/>
        </authorList>
    </citation>
    <scope>NUCLEOTIDE SEQUENCE [LARGE SCALE GENOMIC DNA]</scope>
    <source>
        <strain>638</strain>
    </source>
</reference>
<keyword id="KW-0975">Bacterial flagellum</keyword>
<protein>
    <recommendedName>
        <fullName evidence="1">Flagellar hook-basal body complex protein FliE</fullName>
    </recommendedName>
</protein>
<evidence type="ECO:0000255" key="1">
    <source>
        <dbReference type="HAMAP-Rule" id="MF_00724"/>
    </source>
</evidence>
<sequence length="104" mass="11200">MAIQGIEGVISQLQATAMTARNTSVADTQPEISFAGQLHAALDRISDTQNAARTQAEKFTLGEPGVALNDVMTDLQKSSVSLQMGIQVRNKLVTAYQEMMSMQV</sequence>
<feature type="chain" id="PRO_1000062095" description="Flagellar hook-basal body complex protein FliE">
    <location>
        <begin position="1"/>
        <end position="104"/>
    </location>
</feature>
<accession>A4WBW7</accession>
<dbReference type="EMBL" id="CP000653">
    <property type="protein sequence ID" value="ABP61197.1"/>
    <property type="molecule type" value="Genomic_DNA"/>
</dbReference>
<dbReference type="RefSeq" id="WP_015959530.1">
    <property type="nucleotide sequence ID" value="NC_009436.1"/>
</dbReference>
<dbReference type="SMR" id="A4WBW7"/>
<dbReference type="STRING" id="399742.Ent638_2528"/>
<dbReference type="GeneID" id="93305488"/>
<dbReference type="KEGG" id="ent:Ent638_2528"/>
<dbReference type="eggNOG" id="COG1677">
    <property type="taxonomic scope" value="Bacteria"/>
</dbReference>
<dbReference type="HOGENOM" id="CLU_147249_0_2_6"/>
<dbReference type="OrthoDB" id="8909229at2"/>
<dbReference type="Proteomes" id="UP000000230">
    <property type="component" value="Chromosome"/>
</dbReference>
<dbReference type="GO" id="GO:0009425">
    <property type="term" value="C:bacterial-type flagellum basal body"/>
    <property type="evidence" value="ECO:0007669"/>
    <property type="project" value="UniProtKB-SubCell"/>
</dbReference>
<dbReference type="GO" id="GO:0003774">
    <property type="term" value="F:cytoskeletal motor activity"/>
    <property type="evidence" value="ECO:0007669"/>
    <property type="project" value="InterPro"/>
</dbReference>
<dbReference type="GO" id="GO:0005198">
    <property type="term" value="F:structural molecule activity"/>
    <property type="evidence" value="ECO:0007669"/>
    <property type="project" value="InterPro"/>
</dbReference>
<dbReference type="GO" id="GO:0071973">
    <property type="term" value="P:bacterial-type flagellum-dependent cell motility"/>
    <property type="evidence" value="ECO:0007669"/>
    <property type="project" value="InterPro"/>
</dbReference>
<dbReference type="HAMAP" id="MF_00724">
    <property type="entry name" value="FliE"/>
    <property type="match status" value="1"/>
</dbReference>
<dbReference type="InterPro" id="IPR001624">
    <property type="entry name" value="FliE"/>
</dbReference>
<dbReference type="NCBIfam" id="TIGR00205">
    <property type="entry name" value="fliE"/>
    <property type="match status" value="1"/>
</dbReference>
<dbReference type="PANTHER" id="PTHR34653">
    <property type="match status" value="1"/>
</dbReference>
<dbReference type="PANTHER" id="PTHR34653:SF1">
    <property type="entry name" value="FLAGELLAR HOOK-BASAL BODY COMPLEX PROTEIN FLIE"/>
    <property type="match status" value="1"/>
</dbReference>
<dbReference type="Pfam" id="PF02049">
    <property type="entry name" value="FliE"/>
    <property type="match status" value="1"/>
</dbReference>
<dbReference type="PRINTS" id="PR01006">
    <property type="entry name" value="FLGHOOKFLIE"/>
</dbReference>
<comment type="subcellular location">
    <subcellularLocation>
        <location evidence="1">Bacterial flagellum basal body</location>
    </subcellularLocation>
</comment>
<comment type="similarity">
    <text evidence="1">Belongs to the FliE family.</text>
</comment>
<name>FLIE_ENT38</name>
<gene>
    <name evidence="1" type="primary">fliE</name>
    <name type="ordered locus">Ent638_2528</name>
</gene>
<organism>
    <name type="scientific">Enterobacter sp. (strain 638)</name>
    <dbReference type="NCBI Taxonomy" id="399742"/>
    <lineage>
        <taxon>Bacteria</taxon>
        <taxon>Pseudomonadati</taxon>
        <taxon>Pseudomonadota</taxon>
        <taxon>Gammaproteobacteria</taxon>
        <taxon>Enterobacterales</taxon>
        <taxon>Enterobacteriaceae</taxon>
        <taxon>Enterobacter</taxon>
    </lineage>
</organism>